<protein>
    <recommendedName>
        <fullName>B3 domain-containing protein REM9</fullName>
    </recommendedName>
    <alternativeName>
        <fullName>Auxin response factor 23</fullName>
    </alternativeName>
    <alternativeName>
        <fullName>Protein REPRODUCTIVE MERISTEM 9</fullName>
    </alternativeName>
</protein>
<comment type="subcellular location">
    <subcellularLocation>
        <location evidence="1">Nucleus</location>
    </subcellularLocation>
</comment>
<comment type="sequence caution" evidence="3">
    <conflict type="miscellaneous discrepancy">
        <sequence resource="EMBL-CDS" id="CAD29662"/>
    </conflict>
    <text>Intron retention.</text>
</comment>
<organism>
    <name type="scientific">Arabidopsis thaliana</name>
    <name type="common">Mouse-ear cress</name>
    <dbReference type="NCBI Taxonomy" id="3702"/>
    <lineage>
        <taxon>Eukaryota</taxon>
        <taxon>Viridiplantae</taxon>
        <taxon>Streptophyta</taxon>
        <taxon>Embryophyta</taxon>
        <taxon>Tracheophyta</taxon>
        <taxon>Spermatophyta</taxon>
        <taxon>Magnoliopsida</taxon>
        <taxon>eudicotyledons</taxon>
        <taxon>Gunneridae</taxon>
        <taxon>Pentapetalae</taxon>
        <taxon>rosids</taxon>
        <taxon>malvids</taxon>
        <taxon>Brassicales</taxon>
        <taxon>Brassicaceae</taxon>
        <taxon>Camelineae</taxon>
        <taxon>Arabidopsis</taxon>
    </lineage>
</organism>
<evidence type="ECO:0000255" key="1">
    <source>
        <dbReference type="PROSITE-ProRule" id="PRU00326"/>
    </source>
</evidence>
<evidence type="ECO:0000256" key="2">
    <source>
        <dbReference type="SAM" id="MobiDB-lite"/>
    </source>
</evidence>
<evidence type="ECO:0000305" key="3"/>
<name>REM9_ARATH</name>
<keyword id="KW-0238">DNA-binding</keyword>
<keyword id="KW-0539">Nucleus</keyword>
<keyword id="KW-1185">Reference proteome</keyword>
<keyword id="KW-0677">Repeat</keyword>
<keyword id="KW-0804">Transcription</keyword>
<keyword id="KW-0805">Transcription regulation</keyword>
<gene>
    <name type="primary">REM9</name>
    <name type="synonym">ARF23</name>
    <name type="ordered locus">At4g31690</name>
    <name type="ORF">F28M20.120</name>
</gene>
<reference key="1">
    <citation type="submission" date="2002-04" db="EMBL/GenBank/DDBJ databases">
        <title>Nucleotide sequence of the putative Arabidopsis ARF23.</title>
        <authorList>
            <person name="Ciarbelli A.R."/>
            <person name="Carabelli M."/>
            <person name="Ruzza V."/>
            <person name="Sessa G."/>
            <person name="Steindler C."/>
            <person name="Ruberti I."/>
        </authorList>
    </citation>
    <scope>NUCLEOTIDE SEQUENCE [MRNA]</scope>
    <source>
        <strain>cv. Columbia</strain>
    </source>
</reference>
<reference key="2">
    <citation type="journal article" date="1999" name="Nature">
        <title>Sequence and analysis of chromosome 4 of the plant Arabidopsis thaliana.</title>
        <authorList>
            <person name="Mayer K.F.X."/>
            <person name="Schueller C."/>
            <person name="Wambutt R."/>
            <person name="Murphy G."/>
            <person name="Volckaert G."/>
            <person name="Pohl T."/>
            <person name="Duesterhoeft A."/>
            <person name="Stiekema W."/>
            <person name="Entian K.-D."/>
            <person name="Terryn N."/>
            <person name="Harris B."/>
            <person name="Ansorge W."/>
            <person name="Brandt P."/>
            <person name="Grivell L.A."/>
            <person name="Rieger M."/>
            <person name="Weichselgartner M."/>
            <person name="de Simone V."/>
            <person name="Obermaier B."/>
            <person name="Mache R."/>
            <person name="Mueller M."/>
            <person name="Kreis M."/>
            <person name="Delseny M."/>
            <person name="Puigdomenech P."/>
            <person name="Watson M."/>
            <person name="Schmidtheini T."/>
            <person name="Reichert B."/>
            <person name="Portetelle D."/>
            <person name="Perez-Alonso M."/>
            <person name="Boutry M."/>
            <person name="Bancroft I."/>
            <person name="Vos P."/>
            <person name="Hoheisel J."/>
            <person name="Zimmermann W."/>
            <person name="Wedler H."/>
            <person name="Ridley P."/>
            <person name="Langham S.-A."/>
            <person name="McCullagh B."/>
            <person name="Bilham L."/>
            <person name="Robben J."/>
            <person name="van der Schueren J."/>
            <person name="Grymonprez B."/>
            <person name="Chuang Y.-J."/>
            <person name="Vandenbussche F."/>
            <person name="Braeken M."/>
            <person name="Weltjens I."/>
            <person name="Voet M."/>
            <person name="Bastiaens I."/>
            <person name="Aert R."/>
            <person name="Defoor E."/>
            <person name="Weitzenegger T."/>
            <person name="Bothe G."/>
            <person name="Ramsperger U."/>
            <person name="Hilbert H."/>
            <person name="Braun M."/>
            <person name="Holzer E."/>
            <person name="Brandt A."/>
            <person name="Peters S."/>
            <person name="van Staveren M."/>
            <person name="Dirkse W."/>
            <person name="Mooijman P."/>
            <person name="Klein Lankhorst R."/>
            <person name="Rose M."/>
            <person name="Hauf J."/>
            <person name="Koetter P."/>
            <person name="Berneiser S."/>
            <person name="Hempel S."/>
            <person name="Feldpausch M."/>
            <person name="Lamberth S."/>
            <person name="Van den Daele H."/>
            <person name="De Keyser A."/>
            <person name="Buysshaert C."/>
            <person name="Gielen J."/>
            <person name="Villarroel R."/>
            <person name="De Clercq R."/>
            <person name="van Montagu M."/>
            <person name="Rogers J."/>
            <person name="Cronin A."/>
            <person name="Quail M.A."/>
            <person name="Bray-Allen S."/>
            <person name="Clark L."/>
            <person name="Doggett J."/>
            <person name="Hall S."/>
            <person name="Kay M."/>
            <person name="Lennard N."/>
            <person name="McLay K."/>
            <person name="Mayes R."/>
            <person name="Pettett A."/>
            <person name="Rajandream M.A."/>
            <person name="Lyne M."/>
            <person name="Benes V."/>
            <person name="Rechmann S."/>
            <person name="Borkova D."/>
            <person name="Bloecker H."/>
            <person name="Scharfe M."/>
            <person name="Grimm M."/>
            <person name="Loehnert T.-H."/>
            <person name="Dose S."/>
            <person name="de Haan M."/>
            <person name="Maarse A.C."/>
            <person name="Schaefer M."/>
            <person name="Mueller-Auer S."/>
            <person name="Gabel C."/>
            <person name="Fuchs M."/>
            <person name="Fartmann B."/>
            <person name="Granderath K."/>
            <person name="Dauner D."/>
            <person name="Herzl A."/>
            <person name="Neumann S."/>
            <person name="Argiriou A."/>
            <person name="Vitale D."/>
            <person name="Liguori R."/>
            <person name="Piravandi E."/>
            <person name="Massenet O."/>
            <person name="Quigley F."/>
            <person name="Clabauld G."/>
            <person name="Muendlein A."/>
            <person name="Felber R."/>
            <person name="Schnabl S."/>
            <person name="Hiller R."/>
            <person name="Schmidt W."/>
            <person name="Lecharny A."/>
            <person name="Aubourg S."/>
            <person name="Chefdor F."/>
            <person name="Cooke R."/>
            <person name="Berger C."/>
            <person name="Monfort A."/>
            <person name="Casacuberta E."/>
            <person name="Gibbons T."/>
            <person name="Weber N."/>
            <person name="Vandenbol M."/>
            <person name="Bargues M."/>
            <person name="Terol J."/>
            <person name="Torres A."/>
            <person name="Perez-Perez A."/>
            <person name="Purnelle B."/>
            <person name="Bent E."/>
            <person name="Johnson S."/>
            <person name="Tacon D."/>
            <person name="Jesse T."/>
            <person name="Heijnen L."/>
            <person name="Schwarz S."/>
            <person name="Scholler P."/>
            <person name="Heber S."/>
            <person name="Francs P."/>
            <person name="Bielke C."/>
            <person name="Frishman D."/>
            <person name="Haase D."/>
            <person name="Lemcke K."/>
            <person name="Mewes H.-W."/>
            <person name="Stocker S."/>
            <person name="Zaccaria P."/>
            <person name="Bevan M."/>
            <person name="Wilson R.K."/>
            <person name="de la Bastide M."/>
            <person name="Habermann K."/>
            <person name="Parnell L."/>
            <person name="Dedhia N."/>
            <person name="Gnoj L."/>
            <person name="Schutz K."/>
            <person name="Huang E."/>
            <person name="Spiegel L."/>
            <person name="Sekhon M."/>
            <person name="Murray J."/>
            <person name="Sheet P."/>
            <person name="Cordes M."/>
            <person name="Abu-Threideh J."/>
            <person name="Stoneking T."/>
            <person name="Kalicki J."/>
            <person name="Graves T."/>
            <person name="Harmon G."/>
            <person name="Edwards J."/>
            <person name="Latreille P."/>
            <person name="Courtney L."/>
            <person name="Cloud J."/>
            <person name="Abbott A."/>
            <person name="Scott K."/>
            <person name="Johnson D."/>
            <person name="Minx P."/>
            <person name="Bentley D."/>
            <person name="Fulton B."/>
            <person name="Miller N."/>
            <person name="Greco T."/>
            <person name="Kemp K."/>
            <person name="Kramer J."/>
            <person name="Fulton L."/>
            <person name="Mardis E."/>
            <person name="Dante M."/>
            <person name="Pepin K."/>
            <person name="Hillier L.W."/>
            <person name="Nelson J."/>
            <person name="Spieth J."/>
            <person name="Ryan E."/>
            <person name="Andrews S."/>
            <person name="Geisel C."/>
            <person name="Layman D."/>
            <person name="Du H."/>
            <person name="Ali J."/>
            <person name="Berghoff A."/>
            <person name="Jones K."/>
            <person name="Drone K."/>
            <person name="Cotton M."/>
            <person name="Joshu C."/>
            <person name="Antonoiu B."/>
            <person name="Zidanic M."/>
            <person name="Strong C."/>
            <person name="Sun H."/>
            <person name="Lamar B."/>
            <person name="Yordan C."/>
            <person name="Ma P."/>
            <person name="Zhong J."/>
            <person name="Preston R."/>
            <person name="Vil D."/>
            <person name="Shekher M."/>
            <person name="Matero A."/>
            <person name="Shah R."/>
            <person name="Swaby I.K."/>
            <person name="O'Shaughnessy A."/>
            <person name="Rodriguez M."/>
            <person name="Hoffman J."/>
            <person name="Till S."/>
            <person name="Granat S."/>
            <person name="Shohdy N."/>
            <person name="Hasegawa A."/>
            <person name="Hameed A."/>
            <person name="Lodhi M."/>
            <person name="Johnson A."/>
            <person name="Chen E."/>
            <person name="Marra M.A."/>
            <person name="Martienssen R."/>
            <person name="McCombie W.R."/>
        </authorList>
    </citation>
    <scope>NUCLEOTIDE SEQUENCE [LARGE SCALE GENOMIC DNA]</scope>
    <source>
        <strain>cv. Columbia</strain>
    </source>
</reference>
<reference key="3">
    <citation type="journal article" date="2017" name="Plant J.">
        <title>Araport11: a complete reannotation of the Arabidopsis thaliana reference genome.</title>
        <authorList>
            <person name="Cheng C.Y."/>
            <person name="Krishnakumar V."/>
            <person name="Chan A.P."/>
            <person name="Thibaud-Nissen F."/>
            <person name="Schobel S."/>
            <person name="Town C.D."/>
        </authorList>
    </citation>
    <scope>GENOME REANNOTATION</scope>
    <source>
        <strain>cv. Columbia</strain>
    </source>
</reference>
<reference key="4">
    <citation type="journal article" date="2008" name="Trends Plant Sci.">
        <title>The plant B3 superfamily.</title>
        <authorList>
            <person name="Swaminathan K."/>
            <person name="Peterson K."/>
            <person name="Jack T."/>
        </authorList>
    </citation>
    <scope>GENE FAMILY</scope>
</reference>
<accession>O81778</accession>
<accession>Q8RYC9</accession>
<feature type="chain" id="PRO_0000375103" description="B3 domain-containing protein REM9">
    <location>
        <begin position="1"/>
        <end position="461"/>
    </location>
</feature>
<feature type="DNA-binding region" description="TF-B3 1" evidence="1">
    <location>
        <begin position="11"/>
        <end position="103"/>
    </location>
</feature>
<feature type="DNA-binding region" description="TF-B3 2" evidence="1">
    <location>
        <begin position="148"/>
        <end position="244"/>
    </location>
</feature>
<feature type="DNA-binding region" description="TF-B3 3" evidence="1">
    <location>
        <begin position="230"/>
        <end position="332"/>
    </location>
</feature>
<feature type="region of interest" description="Disordered" evidence="2">
    <location>
        <begin position="110"/>
        <end position="146"/>
    </location>
</feature>
<feature type="region of interest" description="Disordered" evidence="2">
    <location>
        <begin position="333"/>
        <end position="415"/>
    </location>
</feature>
<feature type="compositionally biased region" description="Basic and acidic residues" evidence="2">
    <location>
        <begin position="126"/>
        <end position="143"/>
    </location>
</feature>
<feature type="compositionally biased region" description="Basic and acidic residues" evidence="2">
    <location>
        <begin position="384"/>
        <end position="394"/>
    </location>
</feature>
<feature type="compositionally biased region" description="Polar residues" evidence="2">
    <location>
        <begin position="400"/>
        <end position="415"/>
    </location>
</feature>
<proteinExistence type="evidence at transcript level"/>
<sequence>MANASPLSPTNQHFFQPLLPGFQSNLKIPVNYFSEHIEGKHEGKTVTLRTDASERTWEVKMEGHRLTEGWKEFVEAHDLRIGDFVVFRHEGDMVFHVTALGPSCCEIQYPQSSRHEEGEESGENEISEKEGEENVQKESDKSSSDLNCFSQSVTHSNISRDAVSVPRDFVKRSGFSKGRHEIVLMNEEGKSWESEVKSYMSGAVYLVGGWTTFCTENKLDVGDSCTFKLLQKAKTPVFQLCSRTKHLPLSFTKVNGLINPGKIILVDKDRAEWSMMLKVDSRGAVYIIGGNDWKSFCAANEVGAGESLALELIQGGVLLNQITTCFQMEQPSFKAEDGRHKRARVQNRSQETDKGAETSRASTMGPKLEITEKGEPSRASTMRPKVEIREKIAETGEPSRASNKSSGIEGNLQHTKPCSVKTDQLAKVKESVVDTLTSIGRFQAELETMKRKLEDSLQELN</sequence>
<dbReference type="EMBL" id="AJ441294">
    <property type="protein sequence ID" value="CAD29662.1"/>
    <property type="status" value="ALT_SEQ"/>
    <property type="molecule type" value="mRNA"/>
</dbReference>
<dbReference type="EMBL" id="AL031004">
    <property type="protein sequence ID" value="CAA19754.1"/>
    <property type="molecule type" value="Genomic_DNA"/>
</dbReference>
<dbReference type="EMBL" id="AL161579">
    <property type="protein sequence ID" value="CAB79887.1"/>
    <property type="molecule type" value="Genomic_DNA"/>
</dbReference>
<dbReference type="EMBL" id="CP002687">
    <property type="status" value="NOT_ANNOTATED_CDS"/>
    <property type="molecule type" value="Genomic_DNA"/>
</dbReference>
<dbReference type="PIR" id="T05101">
    <property type="entry name" value="T05101"/>
</dbReference>
<dbReference type="RefSeq" id="NP_001320107.1">
    <property type="nucleotide sequence ID" value="NM_001342105.1"/>
</dbReference>
<dbReference type="SMR" id="O81778"/>
<dbReference type="BioGRID" id="14583">
    <property type="interactions" value="2"/>
</dbReference>
<dbReference type="IntAct" id="O81778">
    <property type="interactions" value="2"/>
</dbReference>
<dbReference type="STRING" id="3702.O81778"/>
<dbReference type="PaxDb" id="3702-AT4G31690.1"/>
<dbReference type="GeneID" id="829297"/>
<dbReference type="KEGG" id="ath:AT4G31690"/>
<dbReference type="Araport" id="AT4G31690"/>
<dbReference type="TAIR" id="AT4G31690"/>
<dbReference type="eggNOG" id="ENOG502STJ8">
    <property type="taxonomic scope" value="Eukaryota"/>
</dbReference>
<dbReference type="HOGENOM" id="CLU_014437_0_0_1"/>
<dbReference type="InParanoid" id="O81778"/>
<dbReference type="OrthoDB" id="1109907at2759"/>
<dbReference type="PhylomeDB" id="O81778"/>
<dbReference type="PRO" id="PR:O81778"/>
<dbReference type="Proteomes" id="UP000006548">
    <property type="component" value="Chromosome 4"/>
</dbReference>
<dbReference type="ExpressionAtlas" id="O81778">
    <property type="expression patterns" value="baseline and differential"/>
</dbReference>
<dbReference type="GO" id="GO:0009941">
    <property type="term" value="C:chloroplast envelope"/>
    <property type="evidence" value="ECO:0007005"/>
    <property type="project" value="TAIR"/>
</dbReference>
<dbReference type="GO" id="GO:0005634">
    <property type="term" value="C:nucleus"/>
    <property type="evidence" value="ECO:0007669"/>
    <property type="project" value="UniProtKB-SubCell"/>
</dbReference>
<dbReference type="GO" id="GO:0000976">
    <property type="term" value="F:transcription cis-regulatory region binding"/>
    <property type="evidence" value="ECO:0000353"/>
    <property type="project" value="TAIR"/>
</dbReference>
<dbReference type="GO" id="GO:0009409">
    <property type="term" value="P:response to cold"/>
    <property type="evidence" value="ECO:0000315"/>
    <property type="project" value="TAIR"/>
</dbReference>
<dbReference type="CDD" id="cd10017">
    <property type="entry name" value="B3_DNA"/>
    <property type="match status" value="3"/>
</dbReference>
<dbReference type="FunFam" id="2.40.330.10:FF:000009">
    <property type="entry name" value="Transcriptional factor B3 family protein"/>
    <property type="match status" value="1"/>
</dbReference>
<dbReference type="Gene3D" id="2.40.330.10">
    <property type="entry name" value="DNA-binding pseudobarrel domain"/>
    <property type="match status" value="3"/>
</dbReference>
<dbReference type="InterPro" id="IPR003340">
    <property type="entry name" value="B3_DNA-bd"/>
</dbReference>
<dbReference type="InterPro" id="IPR015300">
    <property type="entry name" value="DNA-bd_pseudobarrel_sf"/>
</dbReference>
<dbReference type="InterPro" id="IPR039218">
    <property type="entry name" value="REM_fam"/>
</dbReference>
<dbReference type="PANTHER" id="PTHR31674">
    <property type="entry name" value="B3 DOMAIN-CONTAINING PROTEIN REM-LIKE 3-RELATED"/>
    <property type="match status" value="1"/>
</dbReference>
<dbReference type="PANTHER" id="PTHR31674:SF75">
    <property type="entry name" value="TF-B3 DOMAIN-CONTAINING PROTEIN"/>
    <property type="match status" value="1"/>
</dbReference>
<dbReference type="Pfam" id="PF02362">
    <property type="entry name" value="B3"/>
    <property type="match status" value="3"/>
</dbReference>
<dbReference type="SMART" id="SM01019">
    <property type="entry name" value="B3"/>
    <property type="match status" value="3"/>
</dbReference>
<dbReference type="SUPFAM" id="SSF101936">
    <property type="entry name" value="DNA-binding pseudobarrel domain"/>
    <property type="match status" value="3"/>
</dbReference>
<dbReference type="PROSITE" id="PS50863">
    <property type="entry name" value="B3"/>
    <property type="match status" value="3"/>
</dbReference>